<comment type="function">
    <text evidence="2">May be involved in the ESX-1 / type VII specialized secretion system (T7SS), which exports several proteins including EsxA and EsxB (Probable). Involved in DNA conjugation in the recipient strain (PubMed:18554329).</text>
</comment>
<comment type="disruption phenotype">
    <text evidence="2">Loss of DNA conjugation when disrupted in recipient strain; strain still secretes EsxB (PubMed:18554329).</text>
</comment>
<comment type="miscellaneous">
    <text evidence="4">In the well characterized mc(2)155 strain this gene is interrupted and its 5' end is replaced; the last third of the protein is nearly identical in both strains (from residue 468 on in this entry).</text>
</comment>
<comment type="miscellaneous">
    <text evidence="5">DNA conjugation in M.smegmatis is unidirectional with distinct donor and recipient strains; mc(2)155 is a donor strain while MKD8 is a recipient strain. Mutations in a donor strain that alter DNA transfer do not always alter DNA transfer in a recipient strain.</text>
</comment>
<comment type="sequence caution" evidence="4">
    <conflict type="erroneous initiation">
        <sequence resource="EMBL-CDS" id="AWT51073"/>
    </conflict>
    <text>Truncated N-terminus.</text>
</comment>
<dbReference type="EMBL" id="EU711429">
    <property type="protein sequence ID" value="ACE06964.1"/>
    <property type="molecule type" value="Genomic_DNA"/>
</dbReference>
<dbReference type="EMBL" id="CP027541">
    <property type="protein sequence ID" value="AWT51073.1"/>
    <property type="status" value="ALT_INIT"/>
    <property type="molecule type" value="Genomic_DNA"/>
</dbReference>
<dbReference type="SMR" id="L8FLZ2"/>
<dbReference type="PATRIC" id="fig|1214915.3.peg.83"/>
<dbReference type="HOGENOM" id="CLU_021845_0_0_11"/>
<dbReference type="Proteomes" id="UP000011200">
    <property type="component" value="Chromosome"/>
</dbReference>
<organism>
    <name type="scientific">Mycolicibacterium smegmatis (strain MKD8)</name>
    <name type="common">Mycobacterium smegmatis</name>
    <dbReference type="NCBI Taxonomy" id="1214915"/>
    <lineage>
        <taxon>Bacteria</taxon>
        <taxon>Bacillati</taxon>
        <taxon>Actinomycetota</taxon>
        <taxon>Actinomycetes</taxon>
        <taxon>Mycobacteriales</taxon>
        <taxon>Mycobacteriaceae</taxon>
        <taxon>Mycolicibacterium</taxon>
    </lineage>
</organism>
<evidence type="ECO:0000256" key="1">
    <source>
        <dbReference type="SAM" id="MobiDB-lite"/>
    </source>
</evidence>
<evidence type="ECO:0000269" key="2">
    <source>
    </source>
</evidence>
<evidence type="ECO:0000303" key="3">
    <source>
    </source>
</evidence>
<evidence type="ECO:0000305" key="4"/>
<evidence type="ECO:0000305" key="5">
    <source>
    </source>
</evidence>
<evidence type="ECO:0000312" key="6">
    <source>
        <dbReference type="EMBL" id="AWT51073.1"/>
    </source>
</evidence>
<accession>L8FLZ2</accession>
<accession>A0A2U9PH81</accession>
<accession>B3GNJ0</accession>
<name>Y78_MYCSE</name>
<sequence>MVTIQPDASEYGGQTVTGAAWPNIDESVLASAASDLEAVANHLRDNVVPSAGRQKMKLADSWEGKGADSALDEANAIIGEHEQNEVEAREAAAKLRRMEFAVAVAKTLANQTAEQVQNDCQRIMDEGQPSEGEDTRFERVATRIREGYDDNVRMVAEVSHQLAADLGIVPPEPWGHPGSPARTPQTPDQHPDGQLGTVDSGSSAPAPPPSLFAPPPPSRNADRPSQLGTEVAAKAEPTPSLETVQSGSPVPPDPLVGGEAPARSNPPFAQPHSDAPSTSGASTPPAVGPAPAPTTGSGTMRPQAPAQALPPGHLDSLSPATSNEISSNAVSPSAFGAKSGTPLEQFQKGLADAAKTGGSPQTLSTAPSQPLGAPPTTQPLGAAPPTAGPAAPPTTGGPPAPVAQAAGGPGGGAGPAPVAPPLSGGVPGGAVPLGPPPTPPPAAPVTTPPLASGAPVAPTGAAAGAAGGGGAQVAPIPVSAARAERDLAQRAVRRSGVDPMETARRIAAALNAPGMTNVEDFKFFWVTGLTADGKIVVANNYGIAYIPQQVHLPEQVYMASADESISPAERASWVNEPIVAVQRWAEHNGRVLRAVIATEDQLKNSDAGVHHEVLRPEDIPENGKMAGRDRLQVIAPDVSSQLAKIGDADLVSVLPPAPADSNPPEDRRKSLWDNVWKPLASRSAKRGERHLTAFVAYAAHAQEHALYAAHTAALPDEQRQAIREFIYWQHVGQLTADALAPA</sequence>
<feature type="chain" id="PRO_0000438359" description="Uncharacterized protein D806_0078">
    <location>
        <begin position="1"/>
        <end position="742"/>
    </location>
</feature>
<feature type="region of interest" description="Disordered" evidence="1">
    <location>
        <begin position="167"/>
        <end position="471"/>
    </location>
</feature>
<feature type="compositionally biased region" description="Pro residues" evidence="1">
    <location>
        <begin position="205"/>
        <end position="218"/>
    </location>
</feature>
<feature type="compositionally biased region" description="Polar residues" evidence="1">
    <location>
        <begin position="318"/>
        <end position="331"/>
    </location>
</feature>
<feature type="compositionally biased region" description="Polar residues" evidence="1">
    <location>
        <begin position="358"/>
        <end position="368"/>
    </location>
</feature>
<feature type="compositionally biased region" description="Pro residues" evidence="1">
    <location>
        <begin position="386"/>
        <end position="401"/>
    </location>
</feature>
<feature type="compositionally biased region" description="Low complexity" evidence="1">
    <location>
        <begin position="421"/>
        <end position="432"/>
    </location>
</feature>
<feature type="compositionally biased region" description="Pro residues" evidence="1">
    <location>
        <begin position="433"/>
        <end position="447"/>
    </location>
</feature>
<feature type="compositionally biased region" description="Low complexity" evidence="1">
    <location>
        <begin position="448"/>
        <end position="464"/>
    </location>
</feature>
<gene>
    <name evidence="3" type="ORF">0071R</name>
    <name evidence="6" type="ORF">D806_000790</name>
    <name type="ORF">D806_0078</name>
</gene>
<proteinExistence type="predicted"/>
<protein>
    <recommendedName>
        <fullName>Uncharacterized protein D806_0078</fullName>
    </recommendedName>
</protein>
<reference key="1">
    <citation type="journal article" date="2008" name="Mol. Microbiol.">
        <title>The specialized secretory apparatus ESX-1 is essential for DNA transfer in Mycobacterium smegmatis.</title>
        <authorList>
            <person name="Coros A."/>
            <person name="Callahan B."/>
            <person name="Battaglioli E."/>
            <person name="Derbyshire K.M."/>
        </authorList>
    </citation>
    <scope>NUCLEOTIDE SEQUENCE [GENOMIC DNA]</scope>
    <scope>FUNCTION</scope>
    <scope>DISRUPTION PHENOTYPE</scope>
    <source>
        <strain>MKD8</strain>
    </source>
</reference>
<reference key="2">
    <citation type="journal article" date="2013" name="Genome Announc.">
        <title>Draft genome sequence of MKD8, a conjugal recipient Mycobacterium smegmatis strain.</title>
        <authorList>
            <person name="Gray T.A."/>
            <person name="Palumbo M.J."/>
            <person name="Derbyshire K.M."/>
        </authorList>
    </citation>
    <scope>NUCLEOTIDE SEQUENCE [LARGE SCALE GENOMIC DNA]</scope>
    <source>
        <strain>MKD8</strain>
    </source>
</reference>
<reference key="3">
    <citation type="submission" date="2018-03" db="EMBL/GenBank/DDBJ databases">
        <authorList>
            <person name="Derbyshire K."/>
            <person name="Gray T.A."/>
            <person name="Champion M."/>
        </authorList>
    </citation>
    <scope>NUCLEOTIDE SEQUENCE [LARGE SCALE GENOMIC DNA]</scope>
    <source>
        <strain>MKD8</strain>
    </source>
</reference>